<reference key="1">
    <citation type="journal article" date="2004" name="Science">
        <title>The Ashbya gossypii genome as a tool for mapping the ancient Saccharomyces cerevisiae genome.</title>
        <authorList>
            <person name="Dietrich F.S."/>
            <person name="Voegeli S."/>
            <person name="Brachat S."/>
            <person name="Lerch A."/>
            <person name="Gates K."/>
            <person name="Steiner S."/>
            <person name="Mohr C."/>
            <person name="Poehlmann R."/>
            <person name="Luedi P."/>
            <person name="Choi S."/>
            <person name="Wing R.A."/>
            <person name="Flavier A."/>
            <person name="Gaffney T.D."/>
            <person name="Philippsen P."/>
        </authorList>
    </citation>
    <scope>NUCLEOTIDE SEQUENCE [LARGE SCALE GENOMIC DNA]</scope>
    <source>
        <strain>ATCC 10895 / CBS 109.51 / FGSC 9923 / NRRL Y-1056</strain>
    </source>
</reference>
<reference key="2">
    <citation type="journal article" date="2013" name="G3 (Bethesda)">
        <title>Genomes of Ashbya fungi isolated from insects reveal four mating-type loci, numerous translocations, lack of transposons, and distinct gene duplications.</title>
        <authorList>
            <person name="Dietrich F.S."/>
            <person name="Voegeli S."/>
            <person name="Kuo S."/>
            <person name="Philippsen P."/>
        </authorList>
    </citation>
    <scope>GENOME REANNOTATION</scope>
    <source>
        <strain>ATCC 10895 / CBS 109.51 / FGSC 9923 / NRRL Y-1056</strain>
    </source>
</reference>
<evidence type="ECO:0000250" key="1">
    <source>
        <dbReference type="UniProtKB" id="P18074"/>
    </source>
</evidence>
<evidence type="ECO:0000250" key="2">
    <source>
        <dbReference type="UniProtKB" id="P22516"/>
    </source>
</evidence>
<evidence type="ECO:0000250" key="3">
    <source>
        <dbReference type="UniProtKB" id="Q96FC9"/>
    </source>
</evidence>
<evidence type="ECO:0000255" key="4">
    <source>
        <dbReference type="PROSITE-ProRule" id="PRU00541"/>
    </source>
</evidence>
<evidence type="ECO:0000305" key="5"/>
<keyword id="KW-0067">ATP-binding</keyword>
<keyword id="KW-0131">Cell cycle</keyword>
<keyword id="KW-0238">DNA-binding</keyword>
<keyword id="KW-0347">Helicase</keyword>
<keyword id="KW-0378">Hydrolase</keyword>
<keyword id="KW-0408">Iron</keyword>
<keyword id="KW-0411">Iron-sulfur</keyword>
<keyword id="KW-0413">Isomerase</keyword>
<keyword id="KW-0479">Metal-binding</keyword>
<keyword id="KW-0547">Nucleotide-binding</keyword>
<keyword id="KW-0539">Nucleus</keyword>
<keyword id="KW-1185">Reference proteome</keyword>
<accession>Q750G3</accession>
<sequence length="801" mass="90288">MGRCEFYHPFTPYRIQLELMQQIYGLLESGKKMGIFESPTGTGKTLSLICSTFTWLREHKAGYLQGSTGAQDSEEDSEDEPAWVKENYEQSVLADVTASMRAYEQRLAAVDTDLLVKGAAKRQRVEVAVERPDDGAEFLPDAYHSDVEERPSHAGGRGQLRKQLDADIKRLLRKLDEPDAADKSRLAANPLKVYFASRTHTQLGQFAAQLRLPQFPPSLAGLEQERVKFLPLGSRKQLCIHKKVSKVKSDGINEACMDAVSKSECSFFSAAREPDIIRQFQDQAFSTIQDIEDLVGIGNTLHACPYYSSRELIEGAEVITLPYQHLLLENARKTMGIDLRDSIIVIDEAHNLIDTINSIHSASISLTELRQCKLALQAYLAKFKTRLNSGNRVNLLKLIKMVDVLSQFIETQYKNGKRINDPNDIFMGTSMDVVNIHKLEKYMKTSKVAYKIDKYIQATTSNDLQDRGSRDIKQPILFKVASFLKTLANPSEEGQFFFENGHVLKYMLLEPSEVLKSIVTEAKCVILAGGTMEPVNDFFTQLVPYLAPTDVTTYSCGHVIPDDNLNAFIVSENFEFTFANREDIALIERLFHFIYQLASRVPFGMVVFFSSYKYIDFVVKTWTDRGLLSRLDAIKRIYHETSDGADVLKGYSETIQSEKKGAILLAVVGGRLSEGINFENELARAVVLVGLPFPNMFSGEMIVKQQHIKEKVIRNGGTQEDVNKAVREFYENICMKAVNQSVGRAIRHASDFANVYLIDKRYSGPRIQQKLSDWVRKRIQSASNIPKILSDTEAFFSGKGL</sequence>
<comment type="function">
    <text evidence="2">ATP-dependent DNA helicase important for chromosome transmission and normal cell cycle progression in G(2)/M (By similarity). May have a role in changing DNA topology to allow the loading of proteins involved in maintaining sister chromatid cohesion in the vicinity of the centromeres (By similarity). Has a specific role in chromosome segregation during meiosis II (By similarity).</text>
</comment>
<comment type="catalytic activity">
    <reaction evidence="3">
        <text>Couples ATP hydrolysis with the unwinding of duplex DNA at the replication fork by translocating in the 5'-3' direction. This creates two antiparallel DNA single strands (ssDNA). The leading ssDNA polymer is the template for DNA polymerase III holoenzyme which synthesizes a continuous strand.</text>
        <dbReference type="EC" id="5.6.2.3"/>
    </reaction>
</comment>
<comment type="catalytic activity">
    <reaction evidence="3">
        <text>ATP + H2O = ADP + phosphate + H(+)</text>
        <dbReference type="Rhea" id="RHEA:13065"/>
        <dbReference type="ChEBI" id="CHEBI:15377"/>
        <dbReference type="ChEBI" id="CHEBI:15378"/>
        <dbReference type="ChEBI" id="CHEBI:30616"/>
        <dbReference type="ChEBI" id="CHEBI:43474"/>
        <dbReference type="ChEBI" id="CHEBI:456216"/>
        <dbReference type="EC" id="5.6.2.3"/>
    </reaction>
</comment>
<comment type="cofactor">
    <cofactor evidence="1">
        <name>[4Fe-4S] cluster</name>
        <dbReference type="ChEBI" id="CHEBI:49883"/>
    </cofactor>
    <text evidence="1">Binds 1 [4Fe-4S] cluster.</text>
</comment>
<comment type="subcellular location">
    <subcellularLocation>
        <location evidence="2">Nucleus</location>
    </subcellularLocation>
</comment>
<comment type="similarity">
    <text evidence="5">Belongs to the DEAD box helicase family. DEAH subfamily. DDX11/CHL1 sub-subfamily.</text>
</comment>
<dbReference type="EC" id="5.6.2.3" evidence="3"/>
<dbReference type="EMBL" id="AE016820">
    <property type="protein sequence ID" value="AAS54480.1"/>
    <property type="molecule type" value="Genomic_DNA"/>
</dbReference>
<dbReference type="RefSeq" id="NP_986656.1">
    <property type="nucleotide sequence ID" value="NM_211718.1"/>
</dbReference>
<dbReference type="SMR" id="Q750G3"/>
<dbReference type="FunCoup" id="Q750G3">
    <property type="interactions" value="1013"/>
</dbReference>
<dbReference type="STRING" id="284811.Q750G3"/>
<dbReference type="EnsemblFungi" id="AAS54480">
    <property type="protein sequence ID" value="AAS54480"/>
    <property type="gene ID" value="AGOS_AGL010W"/>
</dbReference>
<dbReference type="GeneID" id="4622955"/>
<dbReference type="KEGG" id="ago:AGOS_AGL010W"/>
<dbReference type="eggNOG" id="KOG1133">
    <property type="taxonomic scope" value="Eukaryota"/>
</dbReference>
<dbReference type="HOGENOM" id="CLU_006515_2_0_1"/>
<dbReference type="InParanoid" id="Q750G3"/>
<dbReference type="OMA" id="QTHQFRD"/>
<dbReference type="OrthoDB" id="267079at2759"/>
<dbReference type="Proteomes" id="UP000000591">
    <property type="component" value="Chromosome VII"/>
</dbReference>
<dbReference type="GO" id="GO:0000785">
    <property type="term" value="C:chromatin"/>
    <property type="evidence" value="ECO:0007669"/>
    <property type="project" value="EnsemblFungi"/>
</dbReference>
<dbReference type="GO" id="GO:0005634">
    <property type="term" value="C:nucleus"/>
    <property type="evidence" value="ECO:0000318"/>
    <property type="project" value="GO_Central"/>
</dbReference>
<dbReference type="GO" id="GO:0005524">
    <property type="term" value="F:ATP binding"/>
    <property type="evidence" value="ECO:0007669"/>
    <property type="project" value="UniProtKB-KW"/>
</dbReference>
<dbReference type="GO" id="GO:0016887">
    <property type="term" value="F:ATP hydrolysis activity"/>
    <property type="evidence" value="ECO:0007669"/>
    <property type="project" value="RHEA"/>
</dbReference>
<dbReference type="GO" id="GO:0003677">
    <property type="term" value="F:DNA binding"/>
    <property type="evidence" value="ECO:0007669"/>
    <property type="project" value="UniProtKB-KW"/>
</dbReference>
<dbReference type="GO" id="GO:0003678">
    <property type="term" value="F:DNA helicase activity"/>
    <property type="evidence" value="ECO:0000318"/>
    <property type="project" value="GO_Central"/>
</dbReference>
<dbReference type="GO" id="GO:0051536">
    <property type="term" value="F:iron-sulfur cluster binding"/>
    <property type="evidence" value="ECO:0007669"/>
    <property type="project" value="UniProtKB-KW"/>
</dbReference>
<dbReference type="GO" id="GO:0046872">
    <property type="term" value="F:metal ion binding"/>
    <property type="evidence" value="ECO:0007669"/>
    <property type="project" value="UniProtKB-KW"/>
</dbReference>
<dbReference type="GO" id="GO:0034085">
    <property type="term" value="P:establishment of sister chromatid cohesion"/>
    <property type="evidence" value="ECO:0000318"/>
    <property type="project" value="GO_Central"/>
</dbReference>
<dbReference type="GO" id="GO:0036297">
    <property type="term" value="P:interstrand cross-link repair"/>
    <property type="evidence" value="ECO:0007669"/>
    <property type="project" value="EnsemblFungi"/>
</dbReference>
<dbReference type="GO" id="GO:0031571">
    <property type="term" value="P:mitotic G1 DNA damage checkpoint signaling"/>
    <property type="evidence" value="ECO:0007669"/>
    <property type="project" value="EnsemblFungi"/>
</dbReference>
<dbReference type="GO" id="GO:0007064">
    <property type="term" value="P:mitotic sister chromatid cohesion"/>
    <property type="evidence" value="ECO:0007669"/>
    <property type="project" value="EnsemblFungi"/>
</dbReference>
<dbReference type="FunFam" id="3.40.50.300:FF:001968">
    <property type="entry name" value="ATP-dependent DNA helicase CHL1"/>
    <property type="match status" value="1"/>
</dbReference>
<dbReference type="FunFam" id="3.40.50.300:FF:001372">
    <property type="entry name" value="ATP-dependent DNA helicase chl1"/>
    <property type="match status" value="1"/>
</dbReference>
<dbReference type="Gene3D" id="3.40.50.300">
    <property type="entry name" value="P-loop containing nucleotide triphosphate hydrolases"/>
    <property type="match status" value="3"/>
</dbReference>
<dbReference type="InterPro" id="IPR006555">
    <property type="entry name" value="ATP-dep_Helicase_C"/>
</dbReference>
<dbReference type="InterPro" id="IPR045028">
    <property type="entry name" value="DinG/Rad3-like"/>
</dbReference>
<dbReference type="InterPro" id="IPR014013">
    <property type="entry name" value="Helic_SF1/SF2_ATP-bd_DinG/Rad3"/>
</dbReference>
<dbReference type="InterPro" id="IPR006554">
    <property type="entry name" value="Helicase-like_DEXD_c2"/>
</dbReference>
<dbReference type="InterPro" id="IPR027417">
    <property type="entry name" value="P-loop_NTPase"/>
</dbReference>
<dbReference type="InterPro" id="IPR010614">
    <property type="entry name" value="RAD3-like_helicase_DEAD"/>
</dbReference>
<dbReference type="InterPro" id="IPR013020">
    <property type="entry name" value="Rad3/Chl1-like"/>
</dbReference>
<dbReference type="NCBIfam" id="TIGR00604">
    <property type="entry name" value="rad3"/>
    <property type="match status" value="1"/>
</dbReference>
<dbReference type="PANTHER" id="PTHR11472:SF41">
    <property type="entry name" value="ATP-DEPENDENT DNA HELICASE DDX11-RELATED"/>
    <property type="match status" value="1"/>
</dbReference>
<dbReference type="PANTHER" id="PTHR11472">
    <property type="entry name" value="DNA REPAIR DEAD HELICASE RAD3/XP-D SUBFAMILY MEMBER"/>
    <property type="match status" value="1"/>
</dbReference>
<dbReference type="Pfam" id="PF06733">
    <property type="entry name" value="DEAD_2"/>
    <property type="match status" value="1"/>
</dbReference>
<dbReference type="Pfam" id="PF13307">
    <property type="entry name" value="Helicase_C_2"/>
    <property type="match status" value="1"/>
</dbReference>
<dbReference type="SMART" id="SM00488">
    <property type="entry name" value="DEXDc2"/>
    <property type="match status" value="1"/>
</dbReference>
<dbReference type="SMART" id="SM00491">
    <property type="entry name" value="HELICc2"/>
    <property type="match status" value="1"/>
</dbReference>
<dbReference type="SUPFAM" id="SSF52540">
    <property type="entry name" value="P-loop containing nucleoside triphosphate hydrolases"/>
    <property type="match status" value="2"/>
</dbReference>
<dbReference type="PROSITE" id="PS00690">
    <property type="entry name" value="DEAH_ATP_HELICASE"/>
    <property type="match status" value="1"/>
</dbReference>
<dbReference type="PROSITE" id="PS51193">
    <property type="entry name" value="HELICASE_ATP_BIND_2"/>
    <property type="match status" value="1"/>
</dbReference>
<gene>
    <name type="primary">CHL1</name>
    <name type="ordered locus">AGL010W</name>
</gene>
<feature type="chain" id="PRO_0000351001" description="ATP-dependent DNA helicase CHL1">
    <location>
        <begin position="1"/>
        <end position="801"/>
    </location>
</feature>
<feature type="domain" description="Helicase ATP-binding" evidence="4">
    <location>
        <begin position="2"/>
        <end position="412"/>
    </location>
</feature>
<feature type="short sequence motif" description="DEAH box">
    <location>
        <begin position="347"/>
        <end position="350"/>
    </location>
</feature>
<feature type="binding site" evidence="4">
    <location>
        <begin position="38"/>
        <end position="45"/>
    </location>
    <ligand>
        <name>ATP</name>
        <dbReference type="ChEBI" id="CHEBI:30616"/>
    </ligand>
</feature>
<feature type="binding site" evidence="1">
    <location>
        <position position="239"/>
    </location>
    <ligand>
        <name>[4Fe-4S] cluster</name>
        <dbReference type="ChEBI" id="CHEBI:49883"/>
    </ligand>
</feature>
<feature type="binding site" evidence="1">
    <location>
        <position position="256"/>
    </location>
    <ligand>
        <name>[4Fe-4S] cluster</name>
        <dbReference type="ChEBI" id="CHEBI:49883"/>
    </ligand>
</feature>
<feature type="binding site" evidence="1">
    <location>
        <position position="265"/>
    </location>
    <ligand>
        <name>[4Fe-4S] cluster</name>
        <dbReference type="ChEBI" id="CHEBI:49883"/>
    </ligand>
</feature>
<feature type="binding site" evidence="1">
    <location>
        <position position="304"/>
    </location>
    <ligand>
        <name>[4Fe-4S] cluster</name>
        <dbReference type="ChEBI" id="CHEBI:49883"/>
    </ligand>
</feature>
<organism>
    <name type="scientific">Eremothecium gossypii (strain ATCC 10895 / CBS 109.51 / FGSC 9923 / NRRL Y-1056)</name>
    <name type="common">Yeast</name>
    <name type="synonym">Ashbya gossypii</name>
    <dbReference type="NCBI Taxonomy" id="284811"/>
    <lineage>
        <taxon>Eukaryota</taxon>
        <taxon>Fungi</taxon>
        <taxon>Dikarya</taxon>
        <taxon>Ascomycota</taxon>
        <taxon>Saccharomycotina</taxon>
        <taxon>Saccharomycetes</taxon>
        <taxon>Saccharomycetales</taxon>
        <taxon>Saccharomycetaceae</taxon>
        <taxon>Eremothecium</taxon>
    </lineage>
</organism>
<protein>
    <recommendedName>
        <fullName evidence="2">ATP-dependent DNA helicase CHL1</fullName>
        <ecNumber evidence="3">5.6.2.3</ecNumber>
    </recommendedName>
    <alternativeName>
        <fullName evidence="2">Chromosome loss protein 1</fullName>
    </alternativeName>
    <alternativeName>
        <fullName evidence="5">DNA 5'-3' helicase CHL1</fullName>
    </alternativeName>
</protein>
<proteinExistence type="inferred from homology"/>
<name>CHL1_EREGS</name>